<keyword id="KW-0028">Amino-acid biosynthesis</keyword>
<keyword id="KW-0055">Arginine biosynthesis</keyword>
<keyword id="KW-0067">ATP-binding</keyword>
<keyword id="KW-0963">Cytoplasm</keyword>
<keyword id="KW-0418">Kinase</keyword>
<keyword id="KW-0547">Nucleotide-binding</keyword>
<keyword id="KW-0808">Transferase</keyword>
<reference key="1">
    <citation type="journal article" date="2003" name="Nat. Genet.">
        <title>Comparative analysis of the genome sequences of Bordetella pertussis, Bordetella parapertussis and Bordetella bronchiseptica.</title>
        <authorList>
            <person name="Parkhill J."/>
            <person name="Sebaihia M."/>
            <person name="Preston A."/>
            <person name="Murphy L.D."/>
            <person name="Thomson N.R."/>
            <person name="Harris D.E."/>
            <person name="Holden M.T.G."/>
            <person name="Churcher C.M."/>
            <person name="Bentley S.D."/>
            <person name="Mungall K.L."/>
            <person name="Cerdeno-Tarraga A.-M."/>
            <person name="Temple L."/>
            <person name="James K.D."/>
            <person name="Harris B."/>
            <person name="Quail M.A."/>
            <person name="Achtman M."/>
            <person name="Atkin R."/>
            <person name="Baker S."/>
            <person name="Basham D."/>
            <person name="Bason N."/>
            <person name="Cherevach I."/>
            <person name="Chillingworth T."/>
            <person name="Collins M."/>
            <person name="Cronin A."/>
            <person name="Davis P."/>
            <person name="Doggett J."/>
            <person name="Feltwell T."/>
            <person name="Goble A."/>
            <person name="Hamlin N."/>
            <person name="Hauser H."/>
            <person name="Holroyd S."/>
            <person name="Jagels K."/>
            <person name="Leather S."/>
            <person name="Moule S."/>
            <person name="Norberczak H."/>
            <person name="O'Neil S."/>
            <person name="Ormond D."/>
            <person name="Price C."/>
            <person name="Rabbinowitsch E."/>
            <person name="Rutter S."/>
            <person name="Sanders M."/>
            <person name="Saunders D."/>
            <person name="Seeger K."/>
            <person name="Sharp S."/>
            <person name="Simmonds M."/>
            <person name="Skelton J."/>
            <person name="Squares R."/>
            <person name="Squares S."/>
            <person name="Stevens K."/>
            <person name="Unwin L."/>
            <person name="Whitehead S."/>
            <person name="Barrell B.G."/>
            <person name="Maskell D.J."/>
        </authorList>
    </citation>
    <scope>NUCLEOTIDE SEQUENCE [LARGE SCALE GENOMIC DNA]</scope>
    <source>
        <strain>12822 / ATCC BAA-587 / NCTC 13253</strain>
    </source>
</reference>
<name>ARGB_BORPA</name>
<gene>
    <name evidence="1" type="primary">argB</name>
    <name type="ordered locus">BPP4047</name>
</gene>
<proteinExistence type="inferred from homology"/>
<evidence type="ECO:0000255" key="1">
    <source>
        <dbReference type="HAMAP-Rule" id="MF_00082"/>
    </source>
</evidence>
<evidence type="ECO:0000305" key="2"/>
<accession>Q7W3I6</accession>
<comment type="function">
    <text evidence="1">Catalyzes the ATP-dependent phosphorylation of N-acetyl-L-glutamate.</text>
</comment>
<comment type="catalytic activity">
    <reaction evidence="1">
        <text>N-acetyl-L-glutamate + ATP = N-acetyl-L-glutamyl 5-phosphate + ADP</text>
        <dbReference type="Rhea" id="RHEA:14629"/>
        <dbReference type="ChEBI" id="CHEBI:30616"/>
        <dbReference type="ChEBI" id="CHEBI:44337"/>
        <dbReference type="ChEBI" id="CHEBI:57936"/>
        <dbReference type="ChEBI" id="CHEBI:456216"/>
        <dbReference type="EC" id="2.7.2.8"/>
    </reaction>
</comment>
<comment type="pathway">
    <text evidence="1">Amino-acid biosynthesis; L-arginine biosynthesis; N(2)-acetyl-L-ornithine from L-glutamate: step 2/4.</text>
</comment>
<comment type="subcellular location">
    <subcellularLocation>
        <location evidence="1">Cytoplasm</location>
    </subcellularLocation>
</comment>
<comment type="similarity">
    <text evidence="1">Belongs to the acetylglutamate kinase family. ArgB subfamily.</text>
</comment>
<comment type="sequence caution" evidence="2">
    <conflict type="erroneous initiation">
        <sequence resource="EMBL-CDS" id="CAE39330"/>
    </conflict>
</comment>
<protein>
    <recommendedName>
        <fullName evidence="1">Acetylglutamate kinase</fullName>
        <ecNumber evidence="1">2.7.2.8</ecNumber>
    </recommendedName>
    <alternativeName>
        <fullName evidence="1">N-acetyl-L-glutamate 5-phosphotransferase</fullName>
    </alternativeName>
    <alternativeName>
        <fullName evidence="1">NAG kinase</fullName>
        <shortName evidence="1">NAGK</shortName>
    </alternativeName>
</protein>
<organism>
    <name type="scientific">Bordetella parapertussis (strain 12822 / ATCC BAA-587 / NCTC 13253)</name>
    <dbReference type="NCBI Taxonomy" id="257311"/>
    <lineage>
        <taxon>Bacteria</taxon>
        <taxon>Pseudomonadati</taxon>
        <taxon>Pseudomonadota</taxon>
        <taxon>Betaproteobacteria</taxon>
        <taxon>Burkholderiales</taxon>
        <taxon>Alcaligenaceae</taxon>
        <taxon>Bordetella</taxon>
    </lineage>
</organism>
<dbReference type="EC" id="2.7.2.8" evidence="1"/>
<dbReference type="EMBL" id="BX640435">
    <property type="protein sequence ID" value="CAE39330.1"/>
    <property type="status" value="ALT_INIT"/>
    <property type="molecule type" value="Genomic_DNA"/>
</dbReference>
<dbReference type="RefSeq" id="WP_010929361.1">
    <property type="nucleotide sequence ID" value="NC_002928.3"/>
</dbReference>
<dbReference type="SMR" id="Q7W3I6"/>
<dbReference type="GeneID" id="93205846"/>
<dbReference type="KEGG" id="bpa:BPP4047"/>
<dbReference type="HOGENOM" id="CLU_053680_0_0_4"/>
<dbReference type="UniPathway" id="UPA00068">
    <property type="reaction ID" value="UER00107"/>
</dbReference>
<dbReference type="Proteomes" id="UP000001421">
    <property type="component" value="Chromosome"/>
</dbReference>
<dbReference type="GO" id="GO:0005737">
    <property type="term" value="C:cytoplasm"/>
    <property type="evidence" value="ECO:0007669"/>
    <property type="project" value="UniProtKB-SubCell"/>
</dbReference>
<dbReference type="GO" id="GO:0003991">
    <property type="term" value="F:acetylglutamate kinase activity"/>
    <property type="evidence" value="ECO:0007669"/>
    <property type="project" value="UniProtKB-UniRule"/>
</dbReference>
<dbReference type="GO" id="GO:0005524">
    <property type="term" value="F:ATP binding"/>
    <property type="evidence" value="ECO:0007669"/>
    <property type="project" value="UniProtKB-UniRule"/>
</dbReference>
<dbReference type="GO" id="GO:0042450">
    <property type="term" value="P:arginine biosynthetic process via ornithine"/>
    <property type="evidence" value="ECO:0007669"/>
    <property type="project" value="UniProtKB-UniRule"/>
</dbReference>
<dbReference type="GO" id="GO:0006526">
    <property type="term" value="P:L-arginine biosynthetic process"/>
    <property type="evidence" value="ECO:0007669"/>
    <property type="project" value="UniProtKB-UniPathway"/>
</dbReference>
<dbReference type="CDD" id="cd04250">
    <property type="entry name" value="AAK_NAGK-C"/>
    <property type="match status" value="1"/>
</dbReference>
<dbReference type="FunFam" id="3.40.1160.10:FF:000004">
    <property type="entry name" value="Acetylglutamate kinase"/>
    <property type="match status" value="1"/>
</dbReference>
<dbReference type="Gene3D" id="3.40.1160.10">
    <property type="entry name" value="Acetylglutamate kinase-like"/>
    <property type="match status" value="1"/>
</dbReference>
<dbReference type="HAMAP" id="MF_00082">
    <property type="entry name" value="ArgB"/>
    <property type="match status" value="1"/>
</dbReference>
<dbReference type="InterPro" id="IPR036393">
    <property type="entry name" value="AceGlu_kinase-like_sf"/>
</dbReference>
<dbReference type="InterPro" id="IPR004662">
    <property type="entry name" value="AcgluKinase_fam"/>
</dbReference>
<dbReference type="InterPro" id="IPR037528">
    <property type="entry name" value="ArgB"/>
</dbReference>
<dbReference type="InterPro" id="IPR001048">
    <property type="entry name" value="Asp/Glu/Uridylate_kinase"/>
</dbReference>
<dbReference type="InterPro" id="IPR001057">
    <property type="entry name" value="Glu/AcGlu_kinase"/>
</dbReference>
<dbReference type="InterPro" id="IPR041727">
    <property type="entry name" value="NAGK-C"/>
</dbReference>
<dbReference type="NCBIfam" id="TIGR00761">
    <property type="entry name" value="argB"/>
    <property type="match status" value="1"/>
</dbReference>
<dbReference type="PANTHER" id="PTHR23342">
    <property type="entry name" value="N-ACETYLGLUTAMATE SYNTHASE"/>
    <property type="match status" value="1"/>
</dbReference>
<dbReference type="PANTHER" id="PTHR23342:SF0">
    <property type="entry name" value="N-ACETYLGLUTAMATE SYNTHASE, MITOCHONDRIAL"/>
    <property type="match status" value="1"/>
</dbReference>
<dbReference type="Pfam" id="PF00696">
    <property type="entry name" value="AA_kinase"/>
    <property type="match status" value="1"/>
</dbReference>
<dbReference type="PIRSF" id="PIRSF000728">
    <property type="entry name" value="NAGK"/>
    <property type="match status" value="1"/>
</dbReference>
<dbReference type="PRINTS" id="PR00474">
    <property type="entry name" value="GLU5KINASE"/>
</dbReference>
<dbReference type="SUPFAM" id="SSF53633">
    <property type="entry name" value="Carbamate kinase-like"/>
    <property type="match status" value="1"/>
</dbReference>
<feature type="chain" id="PRO_0000112593" description="Acetylglutamate kinase">
    <location>
        <begin position="1"/>
        <end position="300"/>
    </location>
</feature>
<feature type="binding site" evidence="1">
    <location>
        <begin position="73"/>
        <end position="74"/>
    </location>
    <ligand>
        <name>substrate</name>
    </ligand>
</feature>
<feature type="binding site" evidence="1">
    <location>
        <position position="95"/>
    </location>
    <ligand>
        <name>substrate</name>
    </ligand>
</feature>
<feature type="binding site" evidence="1">
    <location>
        <position position="197"/>
    </location>
    <ligand>
        <name>substrate</name>
    </ligand>
</feature>
<feature type="site" description="Transition state stabilizer" evidence="1">
    <location>
        <position position="38"/>
    </location>
</feature>
<feature type="site" description="Transition state stabilizer" evidence="1">
    <location>
        <position position="257"/>
    </location>
</feature>
<sequence>MTDTPDPAAVLSPAVKAAVLSEALPYIRRFHGKTIVVKYGGNAMTEERLQRSFAHDVVLLKLVGLNPVVVHGGGPQIDDALRRIGKQGTFVQGIRVTDAETMEVVEWVLGGQVQQDIVMMINEVGGKAVGLTGKDGMLIQATKKLMVNKDDPSQPLDIGFVGDITRVEPAVVKALQDDQFIPVISPIGYGEDGTAYNINADVVAGKMAEVLGAEKLLMMTNTPGVLDKGGKLLRSLSAQTIDELFADGTISGGMLPKISSSLDAAKNGVNSVHIVDGRVPHCLLLEILTDQGVGTMISSH</sequence>